<name>LAA2_YEAST</name>
<dbReference type="EMBL" id="Z35771">
    <property type="protein sequence ID" value="CAA84829.1"/>
    <property type="molecule type" value="Genomic_DNA"/>
</dbReference>
<dbReference type="EMBL" id="S47695">
    <property type="protein sequence ID" value="AAB23984.2"/>
    <property type="molecule type" value="Genomic_DNA"/>
</dbReference>
<dbReference type="EMBL" id="AY692725">
    <property type="protein sequence ID" value="AAT92744.1"/>
    <property type="molecule type" value="Genomic_DNA"/>
</dbReference>
<dbReference type="EMBL" id="BK006936">
    <property type="protein sequence ID" value="DAA07109.1"/>
    <property type="molecule type" value="Genomic_DNA"/>
</dbReference>
<dbReference type="PIR" id="S25326">
    <property type="entry name" value="S25326"/>
</dbReference>
<dbReference type="RefSeq" id="NP_009543.1">
    <property type="nucleotide sequence ID" value="NM_001178250.1"/>
</dbReference>
<dbReference type="SMR" id="P32788"/>
<dbReference type="BioGRID" id="32689">
    <property type="interactions" value="98"/>
</dbReference>
<dbReference type="DIP" id="DIP-1925N"/>
<dbReference type="FunCoup" id="P32788">
    <property type="interactions" value="30"/>
</dbReference>
<dbReference type="IntAct" id="P32788">
    <property type="interactions" value="4"/>
</dbReference>
<dbReference type="MINT" id="P32788"/>
<dbReference type="STRING" id="4932.YBL010C"/>
<dbReference type="iPTMnet" id="P32788"/>
<dbReference type="PaxDb" id="4932-YBL010C"/>
<dbReference type="PeptideAtlas" id="P32788"/>
<dbReference type="EnsemblFungi" id="YBL010C_mRNA">
    <property type="protein sequence ID" value="YBL010C"/>
    <property type="gene ID" value="YBL010C"/>
</dbReference>
<dbReference type="GeneID" id="852273"/>
<dbReference type="KEGG" id="sce:YBL010C"/>
<dbReference type="AGR" id="SGD:S000000106"/>
<dbReference type="SGD" id="S000000106">
    <property type="gene designation" value="LAA2"/>
</dbReference>
<dbReference type="VEuPathDB" id="FungiDB:YBL010C"/>
<dbReference type="eggNOG" id="ENOG502RZ92">
    <property type="taxonomic scope" value="Eukaryota"/>
</dbReference>
<dbReference type="HOGENOM" id="CLU_055503_0_0_1"/>
<dbReference type="InParanoid" id="P32788"/>
<dbReference type="OMA" id="EYHDELC"/>
<dbReference type="OrthoDB" id="5378975at2759"/>
<dbReference type="BioCyc" id="YEAST:G3O-28916-MONOMER"/>
<dbReference type="BioGRID-ORCS" id="852273">
    <property type="hits" value="4 hits in 10 CRISPR screens"/>
</dbReference>
<dbReference type="PRO" id="PR:P32788"/>
<dbReference type="Proteomes" id="UP000002311">
    <property type="component" value="Chromosome II"/>
</dbReference>
<dbReference type="RNAct" id="P32788">
    <property type="molecule type" value="protein"/>
</dbReference>
<dbReference type="GO" id="GO:0030136">
    <property type="term" value="C:clathrin-coated vesicle"/>
    <property type="evidence" value="ECO:0007005"/>
    <property type="project" value="SGD"/>
</dbReference>
<dbReference type="GO" id="GO:0035653">
    <property type="term" value="P:clathrin-coated vesicle cargo loading, AP-1-mediated"/>
    <property type="evidence" value="ECO:0000315"/>
    <property type="project" value="SGD"/>
</dbReference>
<dbReference type="GO" id="GO:0015031">
    <property type="term" value="P:protein transport"/>
    <property type="evidence" value="ECO:0007669"/>
    <property type="project" value="UniProtKB-KW"/>
</dbReference>
<dbReference type="GO" id="GO:0031503">
    <property type="term" value="P:protein-containing complex localization"/>
    <property type="evidence" value="ECO:0000315"/>
    <property type="project" value="SGD"/>
</dbReference>
<dbReference type="InterPro" id="IPR031355">
    <property type="entry name" value="YBL010C/LAA2-like"/>
</dbReference>
<dbReference type="PANTHER" id="PTHR38698">
    <property type="entry name" value="EXPRESSED PROTEIN"/>
    <property type="match status" value="1"/>
</dbReference>
<dbReference type="PANTHER" id="PTHR38698:SF1">
    <property type="entry name" value="FUNGAL PROTEIN"/>
    <property type="match status" value="1"/>
</dbReference>
<dbReference type="Pfam" id="PF17104">
    <property type="entry name" value="YBL010C_LAA2"/>
    <property type="match status" value="1"/>
</dbReference>
<organism>
    <name type="scientific">Saccharomyces cerevisiae (strain ATCC 204508 / S288c)</name>
    <name type="common">Baker's yeast</name>
    <dbReference type="NCBI Taxonomy" id="559292"/>
    <lineage>
        <taxon>Eukaryota</taxon>
        <taxon>Fungi</taxon>
        <taxon>Dikarya</taxon>
        <taxon>Ascomycota</taxon>
        <taxon>Saccharomycotina</taxon>
        <taxon>Saccharomycetes</taxon>
        <taxon>Saccharomycetales</taxon>
        <taxon>Saccharomycetaceae</taxon>
        <taxon>Saccharomyces</taxon>
    </lineage>
</organism>
<protein>
    <recommendedName>
        <fullName evidence="5">Clathrin adapter accessory protein LAA2</fullName>
    </recommendedName>
    <alternativeName>
        <fullName evidence="5">Large adaptin accessory protein 2</fullName>
    </alternativeName>
</protein>
<proteinExistence type="evidence at protein level"/>
<gene>
    <name evidence="5" type="primary">LAA2</name>
    <name type="ordered locus">YBL010C</name>
    <name type="ORF">YBL0316</name>
</gene>
<evidence type="ECO:0000256" key="1">
    <source>
        <dbReference type="SAM" id="MobiDB-lite"/>
    </source>
</evidence>
<evidence type="ECO:0000269" key="2">
    <source>
    </source>
</evidence>
<evidence type="ECO:0000269" key="3">
    <source>
    </source>
</evidence>
<evidence type="ECO:0000303" key="4">
    <source>
    </source>
</evidence>
<evidence type="ECO:0000303" key="5">
    <source>
    </source>
</evidence>
<comment type="function">
    <text evidence="3">Involved in localization of clathrin-associated adapter complex (AP-1) and subsequent AP-1-mediated clathrin-coated vesicle cargo loading (PubMed:30523155). Directly mediates the interaction between LAA1 and AP-1 which is required for AP-1 localization (PubMed:30523155). In complex with LAA1, cooperates with the small GTPase ARF1 and the phosphatidyl-inositol-4-phosphate (PI4P) synthesis to confer temporal specificity to AP-1 recruitment (PubMed:30523155).</text>
</comment>
<comment type="subunit">
    <text evidence="3">Interacts with the clathrin-associated adapter complex AP-1 (PubMed:30523155). Interacts with LAA1 (PubMed:30523155).</text>
</comment>
<comment type="subcellular location">
    <subcellularLocation>
        <location evidence="3 4">Cytoplasmic vesicle</location>
        <location evidence="3 4">Clathrin-coated vesicle</location>
    </subcellularLocation>
    <text evidence="3">Localization depends on ADP-ribosylation factor ARF1.</text>
</comment>
<comment type="domain">
    <text evidence="3">The ear-binding motif (EBM) is required for the interaction with the clathrin-coated vesicle and its recruitment to clathrin-coated vesicles.</text>
</comment>
<comment type="disruption phenotype">
    <text evidence="3">Leads to a severe defect in clathrin-associated adapter complex AP-1 localization (PubMed:30523155). Causes increases in the calcofluor white (CFW) sensitivity in cells lacking CHS6 (PubMed:30523155).</text>
</comment>
<comment type="miscellaneous">
    <text evidence="2">Present with 1320 molecules/cell in log phase SD medium.</text>
</comment>
<feature type="chain" id="PRO_0000076536" description="Clathrin adapter accessory protein LAA2">
    <location>
        <begin position="1"/>
        <end position="280"/>
    </location>
</feature>
<feature type="region of interest" description="Disordered" evidence="1">
    <location>
        <begin position="1"/>
        <end position="26"/>
    </location>
</feature>
<feature type="short sequence motif" description="Ear-binding motif" evidence="3">
    <location>
        <begin position="19"/>
        <end position="30"/>
    </location>
</feature>
<feature type="mutagenesis site" description="Impairs the ability to maintain normal levels of AP-1 localization." evidence="3">
    <original>DF</original>
    <variation>AA</variation>
    <location>
        <begin position="23"/>
        <end position="24"/>
    </location>
</feature>
<keyword id="KW-0968">Cytoplasmic vesicle</keyword>
<keyword id="KW-0653">Protein transport</keyword>
<keyword id="KW-1185">Reference proteome</keyword>
<keyword id="KW-0813">Transport</keyword>
<accession>P32788</accession>
<accession>D6VPY9</accession>
<reference key="1">
    <citation type="journal article" date="1992" name="Yeast">
        <title>Sequence of a 12.7 kb segment of yeast chromosome II identifies a PDR-like gene and several new open reading frames.</title>
        <authorList>
            <person name="Delaveau T."/>
            <person name="Jacq C."/>
            <person name="Perea J."/>
        </authorList>
    </citation>
    <scope>NUCLEOTIDE SEQUENCE [GENOMIC DNA]</scope>
    <source>
        <strain>ATCC 204508 / S288c</strain>
    </source>
</reference>
<reference key="2">
    <citation type="journal article" date="1994" name="EMBO J.">
        <title>Complete DNA sequence of yeast chromosome II.</title>
        <authorList>
            <person name="Feldmann H."/>
            <person name="Aigle M."/>
            <person name="Aljinovic G."/>
            <person name="Andre B."/>
            <person name="Baclet M.C."/>
            <person name="Barthe C."/>
            <person name="Baur A."/>
            <person name="Becam A.-M."/>
            <person name="Biteau N."/>
            <person name="Boles E."/>
            <person name="Brandt T."/>
            <person name="Brendel M."/>
            <person name="Brueckner M."/>
            <person name="Bussereau F."/>
            <person name="Christiansen C."/>
            <person name="Contreras R."/>
            <person name="Crouzet M."/>
            <person name="Cziepluch C."/>
            <person name="Demolis N."/>
            <person name="Delaveau T."/>
            <person name="Doignon F."/>
            <person name="Domdey H."/>
            <person name="Duesterhus S."/>
            <person name="Dubois E."/>
            <person name="Dujon B."/>
            <person name="El Bakkoury M."/>
            <person name="Entian K.-D."/>
            <person name="Feuermann M."/>
            <person name="Fiers W."/>
            <person name="Fobo G.M."/>
            <person name="Fritz C."/>
            <person name="Gassenhuber J."/>
            <person name="Glansdorff N."/>
            <person name="Goffeau A."/>
            <person name="Grivell L.A."/>
            <person name="de Haan M."/>
            <person name="Hein C."/>
            <person name="Herbert C.J."/>
            <person name="Hollenberg C.P."/>
            <person name="Holmstroem K."/>
            <person name="Jacq C."/>
            <person name="Jacquet M."/>
            <person name="Jauniaux J.-C."/>
            <person name="Jonniaux J.-L."/>
            <person name="Kallesoee T."/>
            <person name="Kiesau P."/>
            <person name="Kirchrath L."/>
            <person name="Koetter P."/>
            <person name="Korol S."/>
            <person name="Liebl S."/>
            <person name="Logghe M."/>
            <person name="Lohan A.J.E."/>
            <person name="Louis E.J."/>
            <person name="Li Z.Y."/>
            <person name="Maat M.J."/>
            <person name="Mallet L."/>
            <person name="Mannhaupt G."/>
            <person name="Messenguy F."/>
            <person name="Miosga T."/>
            <person name="Molemans F."/>
            <person name="Mueller S."/>
            <person name="Nasr F."/>
            <person name="Obermaier B."/>
            <person name="Perea J."/>
            <person name="Pierard A."/>
            <person name="Piravandi E."/>
            <person name="Pohl F.M."/>
            <person name="Pohl T.M."/>
            <person name="Potier S."/>
            <person name="Proft M."/>
            <person name="Purnelle B."/>
            <person name="Ramezani Rad M."/>
            <person name="Rieger M."/>
            <person name="Rose M."/>
            <person name="Schaaff-Gerstenschlaeger I."/>
            <person name="Scherens B."/>
            <person name="Schwarzlose C."/>
            <person name="Skala J."/>
            <person name="Slonimski P.P."/>
            <person name="Smits P.H.M."/>
            <person name="Souciet J.-L."/>
            <person name="Steensma H.Y."/>
            <person name="Stucka R."/>
            <person name="Urrestarazu L.A."/>
            <person name="van der Aart Q.J.M."/>
            <person name="Van Dyck L."/>
            <person name="Vassarotti A."/>
            <person name="Vetter I."/>
            <person name="Vierendeels F."/>
            <person name="Vissers S."/>
            <person name="Wagner G."/>
            <person name="de Wergifosse P."/>
            <person name="Wolfe K.H."/>
            <person name="Zagulski M."/>
            <person name="Zimmermann F.K."/>
            <person name="Mewes H.-W."/>
            <person name="Kleine K."/>
        </authorList>
    </citation>
    <scope>NUCLEOTIDE SEQUENCE [LARGE SCALE GENOMIC DNA]</scope>
    <source>
        <strain>ATCC 204508 / S288c</strain>
    </source>
</reference>
<reference key="3">
    <citation type="journal article" date="2014" name="G3 (Bethesda)">
        <title>The reference genome sequence of Saccharomyces cerevisiae: Then and now.</title>
        <authorList>
            <person name="Engel S.R."/>
            <person name="Dietrich F.S."/>
            <person name="Fisk D.G."/>
            <person name="Binkley G."/>
            <person name="Balakrishnan R."/>
            <person name="Costanzo M.C."/>
            <person name="Dwight S.S."/>
            <person name="Hitz B.C."/>
            <person name="Karra K."/>
            <person name="Nash R.S."/>
            <person name="Weng S."/>
            <person name="Wong E.D."/>
            <person name="Lloyd P."/>
            <person name="Skrzypek M.S."/>
            <person name="Miyasato S.R."/>
            <person name="Simison M."/>
            <person name="Cherry J.M."/>
        </authorList>
    </citation>
    <scope>GENOME REANNOTATION</scope>
    <source>
        <strain>ATCC 204508 / S288c</strain>
    </source>
</reference>
<reference key="4">
    <citation type="journal article" date="2007" name="Genome Res.">
        <title>Approaching a complete repository of sequence-verified protein-encoding clones for Saccharomyces cerevisiae.</title>
        <authorList>
            <person name="Hu Y."/>
            <person name="Rolfs A."/>
            <person name="Bhullar B."/>
            <person name="Murthy T.V.S."/>
            <person name="Zhu C."/>
            <person name="Berger M.F."/>
            <person name="Camargo A.A."/>
            <person name="Kelley F."/>
            <person name="McCarron S."/>
            <person name="Jepson D."/>
            <person name="Richardson A."/>
            <person name="Raphael J."/>
            <person name="Moreira D."/>
            <person name="Taycher E."/>
            <person name="Zuo D."/>
            <person name="Mohr S."/>
            <person name="Kane M.F."/>
            <person name="Williamson J."/>
            <person name="Simpson A.J.G."/>
            <person name="Bulyk M.L."/>
            <person name="Harlow E."/>
            <person name="Marsischky G."/>
            <person name="Kolodner R.D."/>
            <person name="LaBaer J."/>
        </authorList>
    </citation>
    <scope>NUCLEOTIDE SEQUENCE [GENOMIC DNA]</scope>
    <source>
        <strain>ATCC 204508 / S288c</strain>
    </source>
</reference>
<reference key="5">
    <citation type="journal article" date="2003" name="Nature">
        <title>Global analysis of protein expression in yeast.</title>
        <authorList>
            <person name="Ghaemmaghami S."/>
            <person name="Huh W.-K."/>
            <person name="Bower K."/>
            <person name="Howson R.W."/>
            <person name="Belle A."/>
            <person name="Dephoure N."/>
            <person name="O'Shea E.K."/>
            <person name="Weissman J.S."/>
        </authorList>
    </citation>
    <scope>LEVEL OF PROTEIN EXPRESSION [LARGE SCALE ANALYSIS]</scope>
</reference>
<reference key="6">
    <citation type="journal article" date="2019" name="J. Biol. Chem.">
        <title>Adaptor protein complex-1 (AP-1) is recruited by the HEATR5 protein Laa1 and its co-factor Laa2 in yeast.</title>
        <authorList>
            <person name="Zysnarski C.J."/>
            <person name="Lahiri S."/>
            <person name="Javed F.T."/>
            <person name="Martinez-Marquez J.Y."/>
            <person name="Trowbridge J.W."/>
            <person name="Duncan M.C."/>
        </authorList>
    </citation>
    <scope>FUNCTION</scope>
    <scope>DISRUPTION PHENOTYPE</scope>
    <scope>INTERACTION WITH LAA1</scope>
    <scope>SUBCELLULAR LOCATION</scope>
    <scope>DOMAIN</scope>
    <scope>MUTAGENESIS OF 23-ASP--PHE-24</scope>
</reference>
<sequence length="280" mass="32639">MSDRDQIEPVTNALDAESDSSDDFGNFSDASVENDLYNQNSTLTTSSESVVDNCLNKILPKGEFDLEEETIKNDCFKLSKLIEDERPHVIYEQLVQLDPVLQPFIWNKSHIRRNLLHILRLSDNNGSEGVGTKREEEPLNDELFKRICDAVEKNEQTATGLFLRDNFKIDYTPPMTLKSLQKEEEREQEQHIPQLLMADFTSMDEESLRQYHDTLCQSIDFLVSKSRSLKKQQRDLLKDKTTFENVVTNLTGHTQRLQRDEIALYNKKRNKKKRFSWVGY</sequence>